<keyword id="KW-0002">3D-structure</keyword>
<keyword id="KW-1185">Reference proteome</keyword>
<keyword id="KW-0687">Ribonucleoprotein</keyword>
<keyword id="KW-0689">Ribosomal protein</keyword>
<proteinExistence type="evidence at protein level"/>
<protein>
    <recommendedName>
        <fullName evidence="1">Large ribosomal subunit protein bL35</fullName>
    </recommendedName>
    <alternativeName>
        <fullName evidence="3">50S ribosomal protein L35</fullName>
    </alternativeName>
</protein>
<comment type="similarity">
    <text evidence="1">Belongs to the bacterial ribosomal protein bL35 family.</text>
</comment>
<dbReference type="EMBL" id="CP000480">
    <property type="protein sequence ID" value="ABK75420.1"/>
    <property type="molecule type" value="Genomic_DNA"/>
</dbReference>
<dbReference type="EMBL" id="CP001663">
    <property type="protein sequence ID" value="AFP40163.1"/>
    <property type="molecule type" value="Genomic_DNA"/>
</dbReference>
<dbReference type="RefSeq" id="WP_003895238.1">
    <property type="nucleotide sequence ID" value="NZ_SIJM01000005.1"/>
</dbReference>
<dbReference type="RefSeq" id="YP_888085.1">
    <property type="nucleotide sequence ID" value="NC_008596.1"/>
</dbReference>
<dbReference type="PDB" id="5O60">
    <property type="method" value="EM"/>
    <property type="resolution" value="3.20 A"/>
    <property type="chains" value="e=1-64"/>
</dbReference>
<dbReference type="PDB" id="5O61">
    <property type="method" value="EM"/>
    <property type="resolution" value="3.31 A"/>
    <property type="chains" value="e=1-64"/>
</dbReference>
<dbReference type="PDB" id="5XYM">
    <property type="method" value="EM"/>
    <property type="resolution" value="3.08 A"/>
    <property type="chains" value="3=1-64"/>
</dbReference>
<dbReference type="PDB" id="5ZEB">
    <property type="method" value="EM"/>
    <property type="resolution" value="3.40 A"/>
    <property type="chains" value="6=1-64"/>
</dbReference>
<dbReference type="PDB" id="5ZEP">
    <property type="method" value="EM"/>
    <property type="resolution" value="3.40 A"/>
    <property type="chains" value="3=1-64"/>
</dbReference>
<dbReference type="PDB" id="5ZET">
    <property type="method" value="EM"/>
    <property type="resolution" value="3.20 A"/>
    <property type="chains" value="6=1-64"/>
</dbReference>
<dbReference type="PDB" id="6DZI">
    <property type="method" value="EM"/>
    <property type="resolution" value="3.46 A"/>
    <property type="chains" value="e=2-64"/>
</dbReference>
<dbReference type="PDB" id="6DZP">
    <property type="method" value="EM"/>
    <property type="resolution" value="3.42 A"/>
    <property type="chains" value="e=1-64"/>
</dbReference>
<dbReference type="PDB" id="7S0S">
    <property type="method" value="EM"/>
    <property type="resolution" value="3.05 A"/>
    <property type="chains" value="f=2-64"/>
</dbReference>
<dbReference type="PDB" id="7XAM">
    <property type="method" value="EM"/>
    <property type="resolution" value="2.80 A"/>
    <property type="chains" value="e=1-64"/>
</dbReference>
<dbReference type="PDB" id="7Y41">
    <property type="method" value="EM"/>
    <property type="resolution" value="4.10 A"/>
    <property type="chains" value="e=1-64"/>
</dbReference>
<dbReference type="PDB" id="8FR8">
    <property type="method" value="EM"/>
    <property type="resolution" value="2.76 A"/>
    <property type="chains" value="x=2-64"/>
</dbReference>
<dbReference type="PDB" id="8KAB">
    <property type="method" value="EM"/>
    <property type="resolution" value="3.30 A"/>
    <property type="chains" value="e=1-64"/>
</dbReference>
<dbReference type="PDB" id="8V9J">
    <property type="method" value="EM"/>
    <property type="resolution" value="3.10 A"/>
    <property type="chains" value="7=1-64"/>
</dbReference>
<dbReference type="PDB" id="8V9K">
    <property type="method" value="EM"/>
    <property type="resolution" value="3.10 A"/>
    <property type="chains" value="7=1-64"/>
</dbReference>
<dbReference type="PDB" id="8V9L">
    <property type="method" value="EM"/>
    <property type="resolution" value="3.00 A"/>
    <property type="chains" value="7=1-64"/>
</dbReference>
<dbReference type="PDB" id="8VIO">
    <property type="method" value="EM"/>
    <property type="resolution" value="3.26 A"/>
    <property type="chains" value="e=1-64"/>
</dbReference>
<dbReference type="PDB" id="8VK0">
    <property type="method" value="EM"/>
    <property type="resolution" value="3.14 A"/>
    <property type="chains" value="e=1-64"/>
</dbReference>
<dbReference type="PDB" id="8VK7">
    <property type="method" value="EM"/>
    <property type="resolution" value="3.09 A"/>
    <property type="chains" value="e=1-64"/>
</dbReference>
<dbReference type="PDB" id="8VKI">
    <property type="method" value="EM"/>
    <property type="resolution" value="2.96 A"/>
    <property type="chains" value="e=1-64"/>
</dbReference>
<dbReference type="PDB" id="8VKW">
    <property type="method" value="EM"/>
    <property type="resolution" value="3.44 A"/>
    <property type="chains" value="e=1-64"/>
</dbReference>
<dbReference type="PDB" id="8VR4">
    <property type="method" value="EM"/>
    <property type="resolution" value="2.80 A"/>
    <property type="chains" value="e=1-64"/>
</dbReference>
<dbReference type="PDB" id="8VR8">
    <property type="method" value="EM"/>
    <property type="resolution" value="3.25 A"/>
    <property type="chains" value="e=1-64"/>
</dbReference>
<dbReference type="PDB" id="8VRL">
    <property type="method" value="EM"/>
    <property type="resolution" value="3.33 A"/>
    <property type="chains" value="e=1-64"/>
</dbReference>
<dbReference type="PDB" id="8WHX">
    <property type="method" value="EM"/>
    <property type="resolution" value="2.80 A"/>
    <property type="chains" value="8=1-64"/>
</dbReference>
<dbReference type="PDB" id="8WHY">
    <property type="method" value="EM"/>
    <property type="resolution" value="2.70 A"/>
    <property type="chains" value="8=1-64"/>
</dbReference>
<dbReference type="PDB" id="8WI7">
    <property type="method" value="EM"/>
    <property type="resolution" value="3.50 A"/>
    <property type="chains" value="8=1-64"/>
</dbReference>
<dbReference type="PDB" id="8WI8">
    <property type="method" value="EM"/>
    <property type="resolution" value="2.70 A"/>
    <property type="chains" value="8=1-64"/>
</dbReference>
<dbReference type="PDB" id="8WIB">
    <property type="method" value="EM"/>
    <property type="resolution" value="3.50 A"/>
    <property type="chains" value="8=1-64"/>
</dbReference>
<dbReference type="PDB" id="8WIC">
    <property type="method" value="EM"/>
    <property type="resolution" value="3.50 A"/>
    <property type="chains" value="8=1-64"/>
</dbReference>
<dbReference type="PDB" id="8XZ3">
    <property type="method" value="EM"/>
    <property type="resolution" value="3.60 A"/>
    <property type="chains" value="e=2-64"/>
</dbReference>
<dbReference type="PDBsum" id="5O60"/>
<dbReference type="PDBsum" id="5O61"/>
<dbReference type="PDBsum" id="5XYM"/>
<dbReference type="PDBsum" id="5ZEB"/>
<dbReference type="PDBsum" id="5ZEP"/>
<dbReference type="PDBsum" id="5ZET"/>
<dbReference type="PDBsum" id="6DZI"/>
<dbReference type="PDBsum" id="6DZP"/>
<dbReference type="PDBsum" id="7S0S"/>
<dbReference type="PDBsum" id="7XAM"/>
<dbReference type="PDBsum" id="7Y41"/>
<dbReference type="PDBsum" id="8FR8"/>
<dbReference type="PDBsum" id="8KAB"/>
<dbReference type="PDBsum" id="8V9J"/>
<dbReference type="PDBsum" id="8V9K"/>
<dbReference type="PDBsum" id="8V9L"/>
<dbReference type="PDBsum" id="8VIO"/>
<dbReference type="PDBsum" id="8VK0"/>
<dbReference type="PDBsum" id="8VK7"/>
<dbReference type="PDBsum" id="8VKI"/>
<dbReference type="PDBsum" id="8VKW"/>
<dbReference type="PDBsum" id="8VR4"/>
<dbReference type="PDBsum" id="8VR8"/>
<dbReference type="PDBsum" id="8VRL"/>
<dbReference type="PDBsum" id="8WHX"/>
<dbReference type="PDBsum" id="8WHY"/>
<dbReference type="PDBsum" id="8WI7"/>
<dbReference type="PDBsum" id="8WI8"/>
<dbReference type="PDBsum" id="8WIB"/>
<dbReference type="PDBsum" id="8WIC"/>
<dbReference type="PDBsum" id="8XZ3"/>
<dbReference type="EMDB" id="EMD-29397"/>
<dbReference type="EMDB" id="EMD-33096"/>
<dbReference type="EMDB" id="EMD-33599"/>
<dbReference type="EMDB" id="EMD-37007"/>
<dbReference type="EMDB" id="EMD-3750"/>
<dbReference type="EMDB" id="EMD-3751"/>
<dbReference type="EMDB" id="EMD-37551"/>
<dbReference type="EMDB" id="EMD-37552"/>
<dbReference type="EMDB" id="EMD-37559"/>
<dbReference type="EMDB" id="EMD-37560"/>
<dbReference type="EMDB" id="EMD-37562"/>
<dbReference type="EMDB" id="EMD-37563"/>
<dbReference type="EMDB" id="EMD-38788"/>
<dbReference type="EMDB" id="EMD-43074"/>
<dbReference type="EMDB" id="EMD-43075"/>
<dbReference type="EMDB" id="EMD-43076"/>
<dbReference type="EMDB" id="EMD-43267"/>
<dbReference type="EMDB" id="EMD-43294"/>
<dbReference type="EMDB" id="EMD-43305"/>
<dbReference type="EMDB" id="EMD-43317"/>
<dbReference type="EMDB" id="EMD-43333"/>
<dbReference type="EMDB" id="EMD-43476"/>
<dbReference type="EMDB" id="EMD-43477"/>
<dbReference type="EMDB" id="EMD-43484"/>
<dbReference type="EMDB" id="EMD-6789"/>
<dbReference type="EMDB" id="EMD-6920"/>
<dbReference type="EMDB" id="EMD-6921"/>
<dbReference type="EMDB" id="EMD-6922"/>
<dbReference type="EMDB" id="EMD-8932"/>
<dbReference type="EMDB" id="EMD-8937"/>
<dbReference type="SMR" id="A0QYU7"/>
<dbReference type="IntAct" id="A0QYU7">
    <property type="interactions" value="2"/>
</dbReference>
<dbReference type="STRING" id="246196.MSMEG_3792"/>
<dbReference type="PaxDb" id="246196-MSMEI_3704"/>
<dbReference type="GeneID" id="93458534"/>
<dbReference type="KEGG" id="msb:LJ00_18840"/>
<dbReference type="KEGG" id="msg:MSMEI_3704"/>
<dbReference type="KEGG" id="msm:MSMEG_3792"/>
<dbReference type="PATRIC" id="fig|246196.19.peg.3731"/>
<dbReference type="eggNOG" id="COG0291">
    <property type="taxonomic scope" value="Bacteria"/>
</dbReference>
<dbReference type="OrthoDB" id="9804851at2"/>
<dbReference type="Proteomes" id="UP000000757">
    <property type="component" value="Chromosome"/>
</dbReference>
<dbReference type="Proteomes" id="UP000006158">
    <property type="component" value="Chromosome"/>
</dbReference>
<dbReference type="GO" id="GO:0022625">
    <property type="term" value="C:cytosolic large ribosomal subunit"/>
    <property type="evidence" value="ECO:0007669"/>
    <property type="project" value="TreeGrafter"/>
</dbReference>
<dbReference type="GO" id="GO:0003735">
    <property type="term" value="F:structural constituent of ribosome"/>
    <property type="evidence" value="ECO:0007669"/>
    <property type="project" value="InterPro"/>
</dbReference>
<dbReference type="GO" id="GO:0006412">
    <property type="term" value="P:translation"/>
    <property type="evidence" value="ECO:0007669"/>
    <property type="project" value="UniProtKB-UniRule"/>
</dbReference>
<dbReference type="FunFam" id="4.10.410.60:FF:000001">
    <property type="entry name" value="50S ribosomal protein L35"/>
    <property type="match status" value="1"/>
</dbReference>
<dbReference type="Gene3D" id="4.10.410.60">
    <property type="match status" value="1"/>
</dbReference>
<dbReference type="HAMAP" id="MF_00514">
    <property type="entry name" value="Ribosomal_bL35"/>
    <property type="match status" value="1"/>
</dbReference>
<dbReference type="InterPro" id="IPR001706">
    <property type="entry name" value="Ribosomal_bL35"/>
</dbReference>
<dbReference type="InterPro" id="IPR021137">
    <property type="entry name" value="Ribosomal_bL35-like"/>
</dbReference>
<dbReference type="InterPro" id="IPR018265">
    <property type="entry name" value="Ribosomal_bL35_CS"/>
</dbReference>
<dbReference type="InterPro" id="IPR037229">
    <property type="entry name" value="Ribosomal_bL35_sf"/>
</dbReference>
<dbReference type="NCBIfam" id="TIGR00001">
    <property type="entry name" value="rpmI_bact"/>
    <property type="match status" value="1"/>
</dbReference>
<dbReference type="PANTHER" id="PTHR33343">
    <property type="entry name" value="54S RIBOSOMAL PROTEIN BL35M"/>
    <property type="match status" value="1"/>
</dbReference>
<dbReference type="PANTHER" id="PTHR33343:SF1">
    <property type="entry name" value="LARGE RIBOSOMAL SUBUNIT PROTEIN BL35M"/>
    <property type="match status" value="1"/>
</dbReference>
<dbReference type="Pfam" id="PF01632">
    <property type="entry name" value="Ribosomal_L35p"/>
    <property type="match status" value="1"/>
</dbReference>
<dbReference type="PRINTS" id="PR00064">
    <property type="entry name" value="RIBOSOMALL35"/>
</dbReference>
<dbReference type="SUPFAM" id="SSF143034">
    <property type="entry name" value="L35p-like"/>
    <property type="match status" value="1"/>
</dbReference>
<dbReference type="PROSITE" id="PS00936">
    <property type="entry name" value="RIBOSOMAL_L35"/>
    <property type="match status" value="1"/>
</dbReference>
<organism>
    <name type="scientific">Mycolicibacterium smegmatis (strain ATCC 700084 / mc(2)155)</name>
    <name type="common">Mycobacterium smegmatis</name>
    <dbReference type="NCBI Taxonomy" id="246196"/>
    <lineage>
        <taxon>Bacteria</taxon>
        <taxon>Bacillati</taxon>
        <taxon>Actinomycetota</taxon>
        <taxon>Actinomycetes</taxon>
        <taxon>Mycobacteriales</taxon>
        <taxon>Mycobacteriaceae</taxon>
        <taxon>Mycolicibacterium</taxon>
    </lineage>
</organism>
<feature type="chain" id="PRO_1000050719" description="Large ribosomal subunit protein bL35">
    <location>
        <begin position="1"/>
        <end position="64"/>
    </location>
</feature>
<feature type="region of interest" description="Disordered" evidence="2">
    <location>
        <begin position="1"/>
        <end position="64"/>
    </location>
</feature>
<feature type="compositionally biased region" description="Basic residues" evidence="2">
    <location>
        <begin position="1"/>
        <end position="42"/>
    </location>
</feature>
<feature type="compositionally biased region" description="Polar residues" evidence="2">
    <location>
        <begin position="48"/>
        <end position="58"/>
    </location>
</feature>
<feature type="helix" evidence="5">
    <location>
        <begin position="8"/>
        <end position="13"/>
    </location>
</feature>
<feature type="strand" evidence="6">
    <location>
        <begin position="15"/>
        <end position="17"/>
    </location>
</feature>
<feature type="turn" evidence="6">
    <location>
        <begin position="18"/>
        <end position="20"/>
    </location>
</feature>
<feature type="strand" evidence="4">
    <location>
        <begin position="22"/>
        <end position="25"/>
    </location>
</feature>
<feature type="strand" evidence="5">
    <location>
        <begin position="34"/>
        <end position="36"/>
    </location>
</feature>
<feature type="helix" evidence="5">
    <location>
        <begin position="38"/>
        <end position="43"/>
    </location>
</feature>
<feature type="strand" evidence="5">
    <location>
        <begin position="46"/>
        <end position="48"/>
    </location>
</feature>
<feature type="turn" evidence="5">
    <location>
        <begin position="52"/>
        <end position="54"/>
    </location>
</feature>
<feature type="helix" evidence="5">
    <location>
        <begin position="55"/>
        <end position="61"/>
    </location>
</feature>
<name>RL35_MYCS2</name>
<sequence length="64" mass="7276">MPKAKTHSGASKRFRRTGTGKIVRQKANRRHLLEHKPTKRTRRLDGRTTVSAADNSRINKLLNG</sequence>
<gene>
    <name evidence="1" type="primary">rpmI</name>
    <name type="ordered locus">MSMEG_3792</name>
    <name type="ordered locus">MSMEI_3704</name>
</gene>
<reference key="1">
    <citation type="submission" date="2006-10" db="EMBL/GenBank/DDBJ databases">
        <authorList>
            <person name="Fleischmann R.D."/>
            <person name="Dodson R.J."/>
            <person name="Haft D.H."/>
            <person name="Merkel J.S."/>
            <person name="Nelson W.C."/>
            <person name="Fraser C.M."/>
        </authorList>
    </citation>
    <scope>NUCLEOTIDE SEQUENCE [LARGE SCALE GENOMIC DNA]</scope>
    <source>
        <strain>ATCC 700084 / mc(2)155</strain>
    </source>
</reference>
<reference key="2">
    <citation type="journal article" date="2007" name="Genome Biol.">
        <title>Interrupted coding sequences in Mycobacterium smegmatis: authentic mutations or sequencing errors?</title>
        <authorList>
            <person name="Deshayes C."/>
            <person name="Perrodou E."/>
            <person name="Gallien S."/>
            <person name="Euphrasie D."/>
            <person name="Schaeffer C."/>
            <person name="Van-Dorsselaer A."/>
            <person name="Poch O."/>
            <person name="Lecompte O."/>
            <person name="Reyrat J.-M."/>
        </authorList>
    </citation>
    <scope>NUCLEOTIDE SEQUENCE [LARGE SCALE GENOMIC DNA]</scope>
    <source>
        <strain>ATCC 700084 / mc(2)155</strain>
    </source>
</reference>
<reference key="3">
    <citation type="journal article" date="2009" name="Genome Res.">
        <title>Ortho-proteogenomics: multiple proteomes investigation through orthology and a new MS-based protocol.</title>
        <authorList>
            <person name="Gallien S."/>
            <person name="Perrodou E."/>
            <person name="Carapito C."/>
            <person name="Deshayes C."/>
            <person name="Reyrat J.-M."/>
            <person name="Van Dorsselaer A."/>
            <person name="Poch O."/>
            <person name="Schaeffer C."/>
            <person name="Lecompte O."/>
        </authorList>
    </citation>
    <scope>NUCLEOTIDE SEQUENCE [LARGE SCALE GENOMIC DNA]</scope>
    <source>
        <strain>ATCC 700084 / mc(2)155</strain>
    </source>
</reference>
<accession>A0QYU7</accession>
<accession>I7FN81</accession>
<evidence type="ECO:0000255" key="1">
    <source>
        <dbReference type="HAMAP-Rule" id="MF_00514"/>
    </source>
</evidence>
<evidence type="ECO:0000256" key="2">
    <source>
        <dbReference type="SAM" id="MobiDB-lite"/>
    </source>
</evidence>
<evidence type="ECO:0000305" key="3"/>
<evidence type="ECO:0007829" key="4">
    <source>
        <dbReference type="PDB" id="5O60"/>
    </source>
</evidence>
<evidence type="ECO:0007829" key="5">
    <source>
        <dbReference type="PDB" id="5XYM"/>
    </source>
</evidence>
<evidence type="ECO:0007829" key="6">
    <source>
        <dbReference type="PDB" id="5ZET"/>
    </source>
</evidence>